<organism>
    <name type="scientific">Saccharolobus islandicus (strain Y.G.57.14 / Yellowstone #1)</name>
    <name type="common">Sulfolobus islandicus</name>
    <dbReference type="NCBI Taxonomy" id="439386"/>
    <lineage>
        <taxon>Archaea</taxon>
        <taxon>Thermoproteota</taxon>
        <taxon>Thermoprotei</taxon>
        <taxon>Sulfolobales</taxon>
        <taxon>Sulfolobaceae</taxon>
        <taxon>Saccharolobus</taxon>
    </lineage>
</organism>
<keyword id="KW-0028">Amino-acid biosynthesis</keyword>
<keyword id="KW-0457">Lysine biosynthesis</keyword>
<keyword id="KW-0460">Magnesium</keyword>
<keyword id="KW-0464">Manganese</keyword>
<keyword id="KW-0479">Metal-binding</keyword>
<keyword id="KW-0808">Transferase</keyword>
<name>HOSA_SACI7</name>
<reference key="1">
    <citation type="journal article" date="2009" name="Proc. Natl. Acad. Sci. U.S.A.">
        <title>Biogeography of the Sulfolobus islandicus pan-genome.</title>
        <authorList>
            <person name="Reno M.L."/>
            <person name="Held N.L."/>
            <person name="Fields C.J."/>
            <person name="Burke P.V."/>
            <person name="Whitaker R.J."/>
        </authorList>
    </citation>
    <scope>NUCLEOTIDE SEQUENCE [LARGE SCALE GENOMIC DNA]</scope>
    <source>
        <strain>Y.G.57.14 / Yellowstone #1</strain>
    </source>
</reference>
<dbReference type="EC" id="2.3.3.14" evidence="1 2"/>
<dbReference type="EMBL" id="CP001403">
    <property type="protein sequence ID" value="ACP45496.1"/>
    <property type="molecule type" value="Genomic_DNA"/>
</dbReference>
<dbReference type="SMR" id="C3NDV7"/>
<dbReference type="KEGG" id="siy:YG5714_1230"/>
<dbReference type="HOGENOM" id="CLU_022158_4_0_2"/>
<dbReference type="UniPathway" id="UPA00033">
    <property type="reaction ID" value="UER00028"/>
</dbReference>
<dbReference type="Proteomes" id="UP000002308">
    <property type="component" value="Chromosome"/>
</dbReference>
<dbReference type="GO" id="GO:0003852">
    <property type="term" value="F:2-isopropylmalate synthase activity"/>
    <property type="evidence" value="ECO:0007669"/>
    <property type="project" value="TreeGrafter"/>
</dbReference>
<dbReference type="GO" id="GO:0004410">
    <property type="term" value="F:homocitrate synthase activity"/>
    <property type="evidence" value="ECO:0007669"/>
    <property type="project" value="UniProtKB-UniRule"/>
</dbReference>
<dbReference type="GO" id="GO:0046872">
    <property type="term" value="F:metal ion binding"/>
    <property type="evidence" value="ECO:0007669"/>
    <property type="project" value="UniProtKB-KW"/>
</dbReference>
<dbReference type="GO" id="GO:0009098">
    <property type="term" value="P:L-leucine biosynthetic process"/>
    <property type="evidence" value="ECO:0007669"/>
    <property type="project" value="TreeGrafter"/>
</dbReference>
<dbReference type="GO" id="GO:0019878">
    <property type="term" value="P:lysine biosynthetic process via aminoadipic acid"/>
    <property type="evidence" value="ECO:0007669"/>
    <property type="project" value="UniProtKB-UniRule"/>
</dbReference>
<dbReference type="CDD" id="cd07940">
    <property type="entry name" value="DRE_TIM_IPMS"/>
    <property type="match status" value="1"/>
</dbReference>
<dbReference type="Gene3D" id="1.10.238.260">
    <property type="match status" value="1"/>
</dbReference>
<dbReference type="Gene3D" id="3.30.70.920">
    <property type="match status" value="1"/>
</dbReference>
<dbReference type="Gene3D" id="3.20.20.70">
    <property type="entry name" value="Aldolase class I"/>
    <property type="match status" value="1"/>
</dbReference>
<dbReference type="HAMAP" id="MF_02222">
    <property type="entry name" value="Homocitr_synth_fung_arch"/>
    <property type="match status" value="1"/>
</dbReference>
<dbReference type="InterPro" id="IPR050073">
    <property type="entry name" value="2-IPM_HCS-like"/>
</dbReference>
<dbReference type="InterPro" id="IPR002034">
    <property type="entry name" value="AIPM/Hcit_synth_CS"/>
</dbReference>
<dbReference type="InterPro" id="IPR013785">
    <property type="entry name" value="Aldolase_TIM"/>
</dbReference>
<dbReference type="InterPro" id="IPR011008">
    <property type="entry name" value="Dimeric_a/b-barrel"/>
</dbReference>
<dbReference type="InterPro" id="IPR011872">
    <property type="entry name" value="Homocitrate_synth"/>
</dbReference>
<dbReference type="InterPro" id="IPR054691">
    <property type="entry name" value="LeuA/HCS_post-cat"/>
</dbReference>
<dbReference type="InterPro" id="IPR000891">
    <property type="entry name" value="PYR_CT"/>
</dbReference>
<dbReference type="InterPro" id="IPR019887">
    <property type="entry name" value="Tscrpt_reg_AsnC/Lrp_C"/>
</dbReference>
<dbReference type="NCBIfam" id="TIGR02146">
    <property type="entry name" value="LysS_fung_arch"/>
    <property type="match status" value="1"/>
</dbReference>
<dbReference type="NCBIfam" id="NF002085">
    <property type="entry name" value="PRK00915.1-2"/>
    <property type="match status" value="1"/>
</dbReference>
<dbReference type="PANTHER" id="PTHR10277:SF63">
    <property type="entry name" value="HOMOCITRATE SYNTHASE"/>
    <property type="match status" value="1"/>
</dbReference>
<dbReference type="PANTHER" id="PTHR10277">
    <property type="entry name" value="HOMOCITRATE SYNTHASE-RELATED"/>
    <property type="match status" value="1"/>
</dbReference>
<dbReference type="Pfam" id="PF01037">
    <property type="entry name" value="AsnC_trans_reg"/>
    <property type="match status" value="1"/>
</dbReference>
<dbReference type="Pfam" id="PF22617">
    <property type="entry name" value="HCS_D2"/>
    <property type="match status" value="1"/>
</dbReference>
<dbReference type="Pfam" id="PF00682">
    <property type="entry name" value="HMGL-like"/>
    <property type="match status" value="1"/>
</dbReference>
<dbReference type="SUPFAM" id="SSF51569">
    <property type="entry name" value="Aldolase"/>
    <property type="match status" value="1"/>
</dbReference>
<dbReference type="SUPFAM" id="SSF54909">
    <property type="entry name" value="Dimeric alpha+beta barrel"/>
    <property type="match status" value="1"/>
</dbReference>
<dbReference type="PROSITE" id="PS00816">
    <property type="entry name" value="AIPM_HOMOCIT_SYNTH_2"/>
    <property type="match status" value="1"/>
</dbReference>
<dbReference type="PROSITE" id="PS50991">
    <property type="entry name" value="PYR_CT"/>
    <property type="match status" value="1"/>
</dbReference>
<protein>
    <recommendedName>
        <fullName evidence="2">Homocitrate synthase</fullName>
        <shortName evidence="2">HCS</shortName>
        <ecNumber evidence="1 2">2.3.3.14</ecNumber>
    </recommendedName>
</protein>
<comment type="function">
    <text evidence="1">Catalyzes the aldol-type condensation of 2-oxoglutarate with acetyl-CoA to yield homocitrate. Carries out the first step of the alpha-aminoadipate (AAA) lysine biosynthesis pathway.</text>
</comment>
<comment type="catalytic activity">
    <reaction evidence="1">
        <text>acetyl-CoA + 2-oxoglutarate + H2O = (2R)-homocitrate + CoA + H(+)</text>
        <dbReference type="Rhea" id="RHEA:12929"/>
        <dbReference type="ChEBI" id="CHEBI:15377"/>
        <dbReference type="ChEBI" id="CHEBI:15378"/>
        <dbReference type="ChEBI" id="CHEBI:16810"/>
        <dbReference type="ChEBI" id="CHEBI:57287"/>
        <dbReference type="ChEBI" id="CHEBI:57288"/>
        <dbReference type="ChEBI" id="CHEBI:58884"/>
        <dbReference type="EC" id="2.3.3.14"/>
    </reaction>
    <physiologicalReaction direction="left-to-right" evidence="1">
        <dbReference type="Rhea" id="RHEA:12930"/>
    </physiologicalReaction>
</comment>
<comment type="cofactor">
    <cofactor evidence="1">
        <name>Mg(2+)</name>
        <dbReference type="ChEBI" id="CHEBI:18420"/>
    </cofactor>
    <cofactor evidence="1">
        <name>Mn(2+)</name>
        <dbReference type="ChEBI" id="CHEBI:29035"/>
    </cofactor>
</comment>
<comment type="pathway">
    <text evidence="1">Amino-acid biosynthesis; L-lysine biosynthesis via AAA pathway; L-alpha-aminoadipate from 2-oxoglutarate: step 1/5.</text>
</comment>
<comment type="similarity">
    <text evidence="2">Belongs to the alpha-IPM synthase/homocitrate synthase family. Homocitrate synthase LYS20/LYS21 subfamily.</text>
</comment>
<gene>
    <name type="ordered locus">YG5714_1230</name>
</gene>
<evidence type="ECO:0000250" key="1">
    <source>
        <dbReference type="UniProtKB" id="O87198"/>
    </source>
</evidence>
<evidence type="ECO:0000255" key="2">
    <source>
        <dbReference type="HAMAP-Rule" id="MF_02222"/>
    </source>
</evidence>
<evidence type="ECO:0000255" key="3">
    <source>
        <dbReference type="PROSITE-ProRule" id="PRU01151"/>
    </source>
</evidence>
<accession>C3NDV7</accession>
<proteinExistence type="inferred from homology"/>
<feature type="chain" id="PRO_1000213322" description="Homocitrate synthase">
    <location>
        <begin position="1"/>
        <end position="461"/>
    </location>
</feature>
<feature type="domain" description="Pyruvate carboxyltransferase" evidence="3">
    <location>
        <begin position="4"/>
        <end position="259"/>
    </location>
</feature>
<feature type="active site" description="Proton acceptor" evidence="1">
    <location>
        <position position="292"/>
    </location>
</feature>
<feature type="binding site" evidence="1">
    <location>
        <position position="12"/>
    </location>
    <ligand>
        <name>2-oxoglutarate</name>
        <dbReference type="ChEBI" id="CHEBI:16810"/>
    </ligand>
</feature>
<feature type="binding site" evidence="1">
    <location>
        <position position="13"/>
    </location>
    <ligand>
        <name>Mg(2+)</name>
        <dbReference type="ChEBI" id="CHEBI:18420"/>
    </ligand>
</feature>
<feature type="binding site" evidence="1">
    <location>
        <position position="76"/>
    </location>
    <ligand>
        <name>2-oxoglutarate</name>
        <dbReference type="ChEBI" id="CHEBI:16810"/>
    </ligand>
</feature>
<feature type="binding site" evidence="1">
    <location>
        <position position="136"/>
    </location>
    <ligand>
        <name>2-oxoglutarate</name>
        <dbReference type="ChEBI" id="CHEBI:16810"/>
    </ligand>
</feature>
<feature type="binding site" evidence="1">
    <location>
        <position position="170"/>
    </location>
    <ligand>
        <name>2-oxoglutarate</name>
        <dbReference type="ChEBI" id="CHEBI:16810"/>
    </ligand>
</feature>
<feature type="binding site" evidence="1">
    <location>
        <position position="198"/>
    </location>
    <ligand>
        <name>Mg(2+)</name>
        <dbReference type="ChEBI" id="CHEBI:18420"/>
    </ligand>
</feature>
<feature type="binding site" evidence="1">
    <location>
        <position position="200"/>
    </location>
    <ligand>
        <name>Mg(2+)</name>
        <dbReference type="ChEBI" id="CHEBI:18420"/>
    </ligand>
</feature>
<sequence>MIKVGILDSTLREGEQTPGVIFTVDQRVEIAKALSDLGVSMIEAGHPAVSPDIYEGIKRIVKLKKEGIITSEIVGHSRAVKRDIEIAAELEVDRIAIFYGVSDLHLKAKHKATREEALRTIAETISYAKNHGVKVRFTAEDGSRTDFDFLVTVSKTARDAGADRVSIADTVGILYPSKTKELFSALTREVPNLEFDIHAHNDLGLAVANALAAIEGGATIIHATVNGLGERVGIVPLQQIAAAIKYHFGIEVVKLDKLQYVSSLVEKYSGIPMPPNYPITGDYAFLHKAGVHVAGVLNDPRTYEFMPPETFGRTRDYTIDKYTGKHALRDKYEKLGVKISDAEMDQILAKIKSNTTIRFYRDVDLLELAEEVTGRVLKPRPPEQIEALISVKCDSNVYTTSVTRRLSVINGVKEVMEISGDYDILVKVQAKDSNELNQIIESIRATKGVRSTLTSLVLKKM</sequence>